<feature type="chain" id="PRO_0000063680" description="Keratin, type I cytoskeletal 47 kDa">
    <location>
        <begin position="1"/>
        <end position="429"/>
    </location>
</feature>
<feature type="domain" description="IF rod" evidence="1">
    <location>
        <begin position="70"/>
        <end position="385"/>
    </location>
</feature>
<feature type="region of interest" description="Head">
    <location>
        <begin position="1"/>
        <end position="69"/>
    </location>
</feature>
<feature type="region of interest" description="Disordered" evidence="2">
    <location>
        <begin position="1"/>
        <end position="20"/>
    </location>
</feature>
<feature type="region of interest" description="Coil 1A">
    <location>
        <begin position="70"/>
        <end position="105"/>
    </location>
</feature>
<feature type="region of interest" description="Linker 1">
    <location>
        <begin position="106"/>
        <end position="127"/>
    </location>
</feature>
<feature type="region of interest" description="Coil 1B">
    <location>
        <begin position="128"/>
        <end position="219"/>
    </location>
</feature>
<feature type="region of interest" description="Linker 12">
    <location>
        <begin position="220"/>
        <end position="242"/>
    </location>
</feature>
<feature type="region of interest" description="Coil 2">
    <location>
        <begin position="243"/>
        <end position="381"/>
    </location>
</feature>
<feature type="region of interest" description="Tail">
    <location>
        <begin position="382"/>
        <end position="429"/>
    </location>
</feature>
<feature type="region of interest" description="Disordered" evidence="2">
    <location>
        <begin position="389"/>
        <end position="408"/>
    </location>
</feature>
<feature type="compositionally biased region" description="Low complexity" evidence="2">
    <location>
        <begin position="1"/>
        <end position="16"/>
    </location>
</feature>
<feature type="compositionally biased region" description="Low complexity" evidence="2">
    <location>
        <begin position="391"/>
        <end position="408"/>
    </location>
</feature>
<feature type="site" description="Stutter">
    <location>
        <position position="323"/>
    </location>
</feature>
<accession>P08777</accession>
<protein>
    <recommendedName>
        <fullName>Keratin, type I cytoskeletal 47 kDa</fullName>
    </recommendedName>
</protein>
<name>K1C1_XENLA</name>
<evidence type="ECO:0000255" key="1">
    <source>
        <dbReference type="PROSITE-ProRule" id="PRU01188"/>
    </source>
</evidence>
<evidence type="ECO:0000256" key="2">
    <source>
        <dbReference type="SAM" id="MobiDB-lite"/>
    </source>
</evidence>
<keyword id="KW-0175">Coiled coil</keyword>
<keyword id="KW-0403">Intermediate filament</keyword>
<keyword id="KW-0416">Keratin</keyword>
<keyword id="KW-1185">Reference proteome</keyword>
<comment type="subunit">
    <text>Heterotetramer of two type I and two type II keratins.</text>
</comment>
<comment type="miscellaneous">
    <text>There are two types of cytoskeletal and microfibrillar keratin: I (acidic; 40-55 kDa) and II (neutral to basic; 56-70 kDa).</text>
</comment>
<comment type="similarity">
    <text evidence="1">Belongs to the intermediate filament family.</text>
</comment>
<proteinExistence type="evidence at transcript level"/>
<sequence>MTSYRSSSASYYSGSSSKGGFGSRSLAGSNSYGGSSFGAGFSSGVGSGFSSSGGNFAMAEAASSSFGGNEKHAMQNLNDRLASYLEKVRALEATNSDLEGKIRNWYDKQSDAGIGAGSKDYSKYFEIIAELRNKIRAATIDNATVTLQIDNARLAADDFRLKFENELALRQSVEGDSNGLRRVLDELILARGDFELQIESLTEELAYLKKNHEEEMSHAKSQSAGKVSVEMDAALGVDLTSILNNMRADYEILAEKNRRDAELWFNQKSGELKKEISVGVEQVQASKSEITELKRSLQSLEIELQSQLAMKQSVEGNLNELQGFYSSQLQQIQNTIGSLEEQLLQIRSDMEHQNTEYKLLLDIKTRLEMEIQTYRRLLEGELGQVTTVANTSSVESKTESSSTSTTRTRMVKTIVEEVVDGKVVSSRVE</sequence>
<organism>
    <name type="scientific">Xenopus laevis</name>
    <name type="common">African clawed frog</name>
    <dbReference type="NCBI Taxonomy" id="8355"/>
    <lineage>
        <taxon>Eukaryota</taxon>
        <taxon>Metazoa</taxon>
        <taxon>Chordata</taxon>
        <taxon>Craniata</taxon>
        <taxon>Vertebrata</taxon>
        <taxon>Euteleostomi</taxon>
        <taxon>Amphibia</taxon>
        <taxon>Batrachia</taxon>
        <taxon>Anura</taxon>
        <taxon>Pipoidea</taxon>
        <taxon>Pipidae</taxon>
        <taxon>Xenopodinae</taxon>
        <taxon>Xenopus</taxon>
        <taxon>Xenopus</taxon>
    </lineage>
</organism>
<reference key="1">
    <citation type="journal article" date="1986" name="J. Cell Biol.">
        <title>Stage-specific keratins in Xenopus laevis embryos and tadpoles: the XK81 gene family.</title>
        <authorList>
            <person name="Miyatani S."/>
            <person name="Winkles J.A."/>
            <person name="Sargent T.D."/>
            <person name="Dawid I.B."/>
        </authorList>
    </citation>
    <scope>NUCLEOTIDE SEQUENCE [GENOMIC DNA]</scope>
</reference>
<reference key="2">
    <citation type="journal article" date="1985" name="Proc. Natl. Acad. Sci. U.S.A.">
        <title>Epidermal keratin gene expressed in embryos of Xenopus laevis.</title>
        <authorList>
            <person name="Jonas E."/>
            <person name="Sargent T.D."/>
            <person name="Dawid I.B."/>
        </authorList>
    </citation>
    <scope>NUCLEOTIDE SEQUENCE [MRNA]</scope>
</reference>
<dbReference type="EMBL" id="X04804">
    <property type="protein sequence ID" value="CAA28496.1"/>
    <property type="molecule type" value="Genomic_DNA"/>
</dbReference>
<dbReference type="EMBL" id="X04668">
    <property type="protein sequence ID" value="CAA28374.1"/>
    <property type="molecule type" value="Genomic_DNA"/>
</dbReference>
<dbReference type="EMBL" id="M11940">
    <property type="protein sequence ID" value="AAA49894.1"/>
    <property type="molecule type" value="mRNA"/>
</dbReference>
<dbReference type="PIR" id="A25145">
    <property type="entry name" value="A25145"/>
</dbReference>
<dbReference type="SMR" id="P08777"/>
<dbReference type="AGR" id="Xenbase:XB-GENE-6255484"/>
<dbReference type="Xenbase" id="XB-GENE-6255484">
    <property type="gene designation" value="krt12.4.L"/>
</dbReference>
<dbReference type="Proteomes" id="UP000186698">
    <property type="component" value="Unplaced"/>
</dbReference>
<dbReference type="GO" id="GO:0005856">
    <property type="term" value="C:cytoskeleton"/>
    <property type="evidence" value="ECO:0000318"/>
    <property type="project" value="GO_Central"/>
</dbReference>
<dbReference type="GO" id="GO:0005882">
    <property type="term" value="C:intermediate filament"/>
    <property type="evidence" value="ECO:0007669"/>
    <property type="project" value="UniProtKB-KW"/>
</dbReference>
<dbReference type="GO" id="GO:0005198">
    <property type="term" value="F:structural molecule activity"/>
    <property type="evidence" value="ECO:0007669"/>
    <property type="project" value="InterPro"/>
</dbReference>
<dbReference type="GO" id="GO:0030855">
    <property type="term" value="P:epithelial cell differentiation"/>
    <property type="evidence" value="ECO:0000318"/>
    <property type="project" value="GO_Central"/>
</dbReference>
<dbReference type="GO" id="GO:0045109">
    <property type="term" value="P:intermediate filament organization"/>
    <property type="evidence" value="ECO:0000318"/>
    <property type="project" value="GO_Central"/>
</dbReference>
<dbReference type="FunFam" id="1.20.5.1160:FF:000002">
    <property type="entry name" value="Type I keratin 10"/>
    <property type="match status" value="1"/>
</dbReference>
<dbReference type="FunFam" id="1.20.5.170:FF:000002">
    <property type="entry name" value="Type I keratin KA11"/>
    <property type="match status" value="1"/>
</dbReference>
<dbReference type="FunFam" id="1.20.5.500:FF:000001">
    <property type="entry name" value="Type II keratin 23"/>
    <property type="match status" value="1"/>
</dbReference>
<dbReference type="Gene3D" id="1.20.5.170">
    <property type="match status" value="1"/>
</dbReference>
<dbReference type="Gene3D" id="1.20.5.500">
    <property type="entry name" value="Single helix bin"/>
    <property type="match status" value="1"/>
</dbReference>
<dbReference type="Gene3D" id="1.20.5.1160">
    <property type="entry name" value="Vasodilator-stimulated phosphoprotein"/>
    <property type="match status" value="1"/>
</dbReference>
<dbReference type="InterPro" id="IPR018039">
    <property type="entry name" value="IF_conserved"/>
</dbReference>
<dbReference type="InterPro" id="IPR039008">
    <property type="entry name" value="IF_rod_dom"/>
</dbReference>
<dbReference type="InterPro" id="IPR002957">
    <property type="entry name" value="Keratin_I"/>
</dbReference>
<dbReference type="PANTHER" id="PTHR23239">
    <property type="entry name" value="INTERMEDIATE FILAMENT"/>
    <property type="match status" value="1"/>
</dbReference>
<dbReference type="PANTHER" id="PTHR23239:SF121">
    <property type="entry name" value="KERATIN, TYPE I CYTOSKELETAL 13"/>
    <property type="match status" value="1"/>
</dbReference>
<dbReference type="Pfam" id="PF00038">
    <property type="entry name" value="Filament"/>
    <property type="match status" value="1"/>
</dbReference>
<dbReference type="PRINTS" id="PR01248">
    <property type="entry name" value="TYPE1KERATIN"/>
</dbReference>
<dbReference type="SMART" id="SM01391">
    <property type="entry name" value="Filament"/>
    <property type="match status" value="1"/>
</dbReference>
<dbReference type="SUPFAM" id="SSF64593">
    <property type="entry name" value="Intermediate filament protein, coiled coil region"/>
    <property type="match status" value="2"/>
</dbReference>
<dbReference type="PROSITE" id="PS00226">
    <property type="entry name" value="IF_ROD_1"/>
    <property type="match status" value="1"/>
</dbReference>
<dbReference type="PROSITE" id="PS51842">
    <property type="entry name" value="IF_ROD_2"/>
    <property type="match status" value="1"/>
</dbReference>
<gene>
    <name type="primary">xk81a1</name>
</gene>